<proteinExistence type="inferred from homology"/>
<name>CLP1_BOTFB</name>
<organism>
    <name type="scientific">Botryotinia fuckeliana (strain B05.10)</name>
    <name type="common">Noble rot fungus</name>
    <name type="synonym">Botrytis cinerea</name>
    <dbReference type="NCBI Taxonomy" id="332648"/>
    <lineage>
        <taxon>Eukaryota</taxon>
        <taxon>Fungi</taxon>
        <taxon>Dikarya</taxon>
        <taxon>Ascomycota</taxon>
        <taxon>Pezizomycotina</taxon>
        <taxon>Leotiomycetes</taxon>
        <taxon>Helotiales</taxon>
        <taxon>Sclerotiniaceae</taxon>
        <taxon>Botrytis</taxon>
    </lineage>
</organism>
<dbReference type="EMBL" id="CP009816">
    <property type="protein sequence ID" value="ATZ55803.1"/>
    <property type="molecule type" value="Genomic_DNA"/>
</dbReference>
<dbReference type="SMR" id="A6S936"/>
<dbReference type="EnsemblFungi" id="Bcin12g03610.1">
    <property type="protein sequence ID" value="Bcin12p03610.1"/>
    <property type="gene ID" value="Bcin12g03610"/>
</dbReference>
<dbReference type="GeneID" id="5432770"/>
<dbReference type="KEGG" id="bfu:BCIN_12g03610"/>
<dbReference type="VEuPathDB" id="FungiDB:Bcin12g03610"/>
<dbReference type="OMA" id="VQYVNCH"/>
<dbReference type="OrthoDB" id="258143at2759"/>
<dbReference type="Proteomes" id="UP000001798">
    <property type="component" value="Chromosome bcin12"/>
</dbReference>
<dbReference type="GO" id="GO:0005849">
    <property type="term" value="C:mRNA cleavage factor complex"/>
    <property type="evidence" value="ECO:0007669"/>
    <property type="project" value="UniProtKB-UniRule"/>
</dbReference>
<dbReference type="GO" id="GO:0005524">
    <property type="term" value="F:ATP binding"/>
    <property type="evidence" value="ECO:0007669"/>
    <property type="project" value="UniProtKB-UniRule"/>
</dbReference>
<dbReference type="GO" id="GO:0051731">
    <property type="term" value="F:polynucleotide 5'-hydroxyl-kinase activity"/>
    <property type="evidence" value="ECO:0007669"/>
    <property type="project" value="InterPro"/>
</dbReference>
<dbReference type="GO" id="GO:0031124">
    <property type="term" value="P:mRNA 3'-end processing"/>
    <property type="evidence" value="ECO:0007669"/>
    <property type="project" value="UniProtKB-UniRule"/>
</dbReference>
<dbReference type="GO" id="GO:0006388">
    <property type="term" value="P:tRNA splicing, via endonucleolytic cleavage and ligation"/>
    <property type="evidence" value="ECO:0007669"/>
    <property type="project" value="TreeGrafter"/>
</dbReference>
<dbReference type="FunFam" id="2.60.120.1030:FF:000001">
    <property type="entry name" value="Protein CLP1 homolog 5"/>
    <property type="match status" value="1"/>
</dbReference>
<dbReference type="Gene3D" id="2.60.120.1030">
    <property type="entry name" value="Clp1, DNA binding domain"/>
    <property type="match status" value="1"/>
</dbReference>
<dbReference type="Gene3D" id="3.40.50.300">
    <property type="entry name" value="P-loop containing nucleotide triphosphate hydrolases"/>
    <property type="match status" value="1"/>
</dbReference>
<dbReference type="Gene3D" id="2.40.30.330">
    <property type="entry name" value="Pre-mRNA cleavage complex subunit Clp1, C-terminal domain"/>
    <property type="match status" value="1"/>
</dbReference>
<dbReference type="HAMAP" id="MF_03035">
    <property type="entry name" value="Clp1"/>
    <property type="match status" value="1"/>
</dbReference>
<dbReference type="InterPro" id="IPR028606">
    <property type="entry name" value="Clp1"/>
</dbReference>
<dbReference type="InterPro" id="IPR045116">
    <property type="entry name" value="Clp1/Grc3"/>
</dbReference>
<dbReference type="InterPro" id="IPR010655">
    <property type="entry name" value="Clp1_C"/>
</dbReference>
<dbReference type="InterPro" id="IPR038238">
    <property type="entry name" value="Clp1_C_sf"/>
</dbReference>
<dbReference type="InterPro" id="IPR032324">
    <property type="entry name" value="Clp1_N"/>
</dbReference>
<dbReference type="InterPro" id="IPR038239">
    <property type="entry name" value="Clp1_N_sf"/>
</dbReference>
<dbReference type="InterPro" id="IPR032319">
    <property type="entry name" value="CLP1_P"/>
</dbReference>
<dbReference type="InterPro" id="IPR027417">
    <property type="entry name" value="P-loop_NTPase"/>
</dbReference>
<dbReference type="PANTHER" id="PTHR12755">
    <property type="entry name" value="CLEAVAGE/POLYADENYLATION FACTOR IA SUBUNIT CLP1P"/>
    <property type="match status" value="1"/>
</dbReference>
<dbReference type="PANTHER" id="PTHR12755:SF6">
    <property type="entry name" value="POLYRIBONUCLEOTIDE 5'-HYDROXYL-KINASE CLP1"/>
    <property type="match status" value="1"/>
</dbReference>
<dbReference type="Pfam" id="PF06807">
    <property type="entry name" value="Clp1"/>
    <property type="match status" value="1"/>
</dbReference>
<dbReference type="Pfam" id="PF16573">
    <property type="entry name" value="CLP1_N"/>
    <property type="match status" value="1"/>
</dbReference>
<dbReference type="Pfam" id="PF16575">
    <property type="entry name" value="CLP1_P"/>
    <property type="match status" value="1"/>
</dbReference>
<dbReference type="SUPFAM" id="SSF52540">
    <property type="entry name" value="P-loop containing nucleoside triphosphate hydrolases"/>
    <property type="match status" value="2"/>
</dbReference>
<evidence type="ECO:0000255" key="1">
    <source>
        <dbReference type="HAMAP-Rule" id="MF_03035"/>
    </source>
</evidence>
<evidence type="ECO:0000305" key="2"/>
<protein>
    <recommendedName>
        <fullName evidence="1">mRNA cleavage and polyadenylation factor clp1</fullName>
    </recommendedName>
</protein>
<comment type="function">
    <text evidence="1">Required for endonucleolytic cleavage during polyadenylation-dependent pre-mRNA 3'-end formation.</text>
</comment>
<comment type="subunit">
    <text evidence="1">Component of a pre-mRNA cleavage factor complex. Interacts directly with PCF11.</text>
</comment>
<comment type="subcellular location">
    <subcellularLocation>
        <location evidence="1">Nucleus</location>
    </subcellularLocation>
</comment>
<comment type="similarity">
    <text evidence="1">Belongs to the Clp1 family. Clp1 subfamily.</text>
</comment>
<comment type="caution">
    <text evidence="2">May lack the polyribonucleotide 5'-hydroxyl-kinase and polynucleotide 5'-hydroxyl-kinase activities that are characteristic of the human ortholog.</text>
</comment>
<feature type="chain" id="PRO_0000375198" description="mRNA cleavage and polyadenylation factor clp1">
    <location>
        <begin position="1"/>
        <end position="461"/>
    </location>
</feature>
<feature type="binding site" evidence="1">
    <location>
        <position position="34"/>
    </location>
    <ligand>
        <name>ATP</name>
        <dbReference type="ChEBI" id="CHEBI:30616"/>
    </ligand>
</feature>
<feature type="binding site" evidence="1">
    <location>
        <position position="73"/>
    </location>
    <ligand>
        <name>ATP</name>
        <dbReference type="ChEBI" id="CHEBI:30616"/>
    </ligand>
</feature>
<feature type="binding site" evidence="1">
    <location>
        <begin position="134"/>
        <end position="139"/>
    </location>
    <ligand>
        <name>ATP</name>
        <dbReference type="ChEBI" id="CHEBI:30616"/>
    </ligand>
</feature>
<accession>A6S936</accession>
<accession>A0A384JZ11</accession>
<sequence>MSIPGLGQAVHAARTAAPAAVAHTNIHELQANSEWRFEVAIGSSIEVKVLSGTAEIFGTELAVNHTYTFHGTKSSIYTWHGCRLEVNGPCEEYTAEETPMISYINTHFALENLRSDAKKAGQDGPRVLIVGPNNTGKTSLAKLLTAYAVRMGRQPIVVNTDSREGMLSIPGSLTAAAFKSIVDVEEGWGSSSTSGPSPVPVKLPLCYYYGLPSPEDNVKLFKPVVTRLALAATSRLQDDAVCRETGMIIDTPGVISQGKGGYDLISHIVSEFAVNIILVLGSERLHSEMLRRFSTHKTDNGEAITLVRLDKSGGCVDRDDAFMQQMREATIKEYFFGDAKRTLSPHTQVVNFDELSIYKVKEAHSMQSAFLPGGEEEVEPTQYEKVEPTPSMLHCIFAVMHASTRDSQDTIRDASVMGFVYVAEVDEKKKRMKILAPLNTRVTDRPLIWGSWPEAPVNLMG</sequence>
<gene>
    <name type="primary">clp1</name>
    <name type="ORF">BC1G_08728</name>
    <name type="ORF">BCIN_12g03610</name>
</gene>
<reference key="1">
    <citation type="journal article" date="2011" name="PLoS Genet.">
        <title>Genomic analysis of the necrotrophic fungal pathogens Sclerotinia sclerotiorum and Botrytis cinerea.</title>
        <authorList>
            <person name="Amselem J."/>
            <person name="Cuomo C.A."/>
            <person name="van Kan J.A.L."/>
            <person name="Viaud M."/>
            <person name="Benito E.P."/>
            <person name="Couloux A."/>
            <person name="Coutinho P.M."/>
            <person name="de Vries R.P."/>
            <person name="Dyer P.S."/>
            <person name="Fillinger S."/>
            <person name="Fournier E."/>
            <person name="Gout L."/>
            <person name="Hahn M."/>
            <person name="Kohn L."/>
            <person name="Lapalu N."/>
            <person name="Plummer K.M."/>
            <person name="Pradier J.-M."/>
            <person name="Quevillon E."/>
            <person name="Sharon A."/>
            <person name="Simon A."/>
            <person name="ten Have A."/>
            <person name="Tudzynski B."/>
            <person name="Tudzynski P."/>
            <person name="Wincker P."/>
            <person name="Andrew M."/>
            <person name="Anthouard V."/>
            <person name="Beever R.E."/>
            <person name="Beffa R."/>
            <person name="Benoit I."/>
            <person name="Bouzid O."/>
            <person name="Brault B."/>
            <person name="Chen Z."/>
            <person name="Choquer M."/>
            <person name="Collemare J."/>
            <person name="Cotton P."/>
            <person name="Danchin E.G."/>
            <person name="Da Silva C."/>
            <person name="Gautier A."/>
            <person name="Giraud C."/>
            <person name="Giraud T."/>
            <person name="Gonzalez C."/>
            <person name="Grossetete S."/>
            <person name="Gueldener U."/>
            <person name="Henrissat B."/>
            <person name="Howlett B.J."/>
            <person name="Kodira C."/>
            <person name="Kretschmer M."/>
            <person name="Lappartient A."/>
            <person name="Leroch M."/>
            <person name="Levis C."/>
            <person name="Mauceli E."/>
            <person name="Neuveglise C."/>
            <person name="Oeser B."/>
            <person name="Pearson M."/>
            <person name="Poulain J."/>
            <person name="Poussereau N."/>
            <person name="Quesneville H."/>
            <person name="Rascle C."/>
            <person name="Schumacher J."/>
            <person name="Segurens B."/>
            <person name="Sexton A."/>
            <person name="Silva E."/>
            <person name="Sirven C."/>
            <person name="Soanes D.M."/>
            <person name="Talbot N.J."/>
            <person name="Templeton M."/>
            <person name="Yandava C."/>
            <person name="Yarden O."/>
            <person name="Zeng Q."/>
            <person name="Rollins J.A."/>
            <person name="Lebrun M.-H."/>
            <person name="Dickman M."/>
        </authorList>
    </citation>
    <scope>NUCLEOTIDE SEQUENCE [LARGE SCALE GENOMIC DNA]</scope>
    <source>
        <strain>B05.10</strain>
    </source>
</reference>
<reference key="2">
    <citation type="journal article" date="2012" name="Eukaryot. Cell">
        <title>Genome update of Botrytis cinerea strains B05.10 and T4.</title>
        <authorList>
            <person name="Staats M."/>
            <person name="van Kan J.A.L."/>
        </authorList>
    </citation>
    <scope>NUCLEOTIDE SEQUENCE [LARGE SCALE GENOMIC DNA]</scope>
    <scope>GENOME REANNOTATION</scope>
    <source>
        <strain>B05.10</strain>
    </source>
</reference>
<reference key="3">
    <citation type="journal article" date="2017" name="Mol. Plant Pathol.">
        <title>A gapless genome sequence of the fungus Botrytis cinerea.</title>
        <authorList>
            <person name="van Kan J.A.L."/>
            <person name="Stassen J.H.M."/>
            <person name="Mosbach A."/>
            <person name="van der Lee T.A.J."/>
            <person name="Faino L."/>
            <person name="Farmer A.D."/>
            <person name="Papasotiriou D.G."/>
            <person name="Zhou S."/>
            <person name="Seidl M.F."/>
            <person name="Cottam E."/>
            <person name="Edel D."/>
            <person name="Hahn M."/>
            <person name="Schwartz D.C."/>
            <person name="Dietrich R.A."/>
            <person name="Widdison S."/>
            <person name="Scalliet G."/>
        </authorList>
    </citation>
    <scope>NUCLEOTIDE SEQUENCE [LARGE SCALE GENOMIC DNA]</scope>
    <scope>GENOME REANNOTATION</scope>
    <source>
        <strain>B05.10</strain>
    </source>
</reference>
<keyword id="KW-0067">ATP-binding</keyword>
<keyword id="KW-0507">mRNA processing</keyword>
<keyword id="KW-0547">Nucleotide-binding</keyword>
<keyword id="KW-0539">Nucleus</keyword>
<keyword id="KW-1185">Reference proteome</keyword>